<comment type="function">
    <text evidence="1">An essential GTPase that binds both GDP and GTP, with rapid nucleotide exchange. Plays a role in 16S rRNA processing and 30S ribosomal subunit biogenesis and possibly also in cell cycle regulation and energy metabolism.</text>
</comment>
<comment type="subunit">
    <text evidence="1">Monomer.</text>
</comment>
<comment type="subcellular location">
    <subcellularLocation>
        <location>Cytoplasm</location>
    </subcellularLocation>
    <subcellularLocation>
        <location evidence="1">Cell membrane</location>
        <topology evidence="1">Peripheral membrane protein</topology>
    </subcellularLocation>
</comment>
<comment type="similarity">
    <text evidence="1 2">Belongs to the TRAFAC class TrmE-Era-EngA-EngB-Septin-like GTPase superfamily. Era GTPase family.</text>
</comment>
<accession>Q8RB50</accession>
<protein>
    <recommendedName>
        <fullName evidence="1">GTPase Era</fullName>
    </recommendedName>
</protein>
<proteinExistence type="inferred from homology"/>
<organism>
    <name type="scientific">Caldanaerobacter subterraneus subsp. tengcongensis (strain DSM 15242 / JCM 11007 / NBRC 100824 / MB4)</name>
    <name type="common">Thermoanaerobacter tengcongensis</name>
    <dbReference type="NCBI Taxonomy" id="273068"/>
    <lineage>
        <taxon>Bacteria</taxon>
        <taxon>Bacillati</taxon>
        <taxon>Bacillota</taxon>
        <taxon>Clostridia</taxon>
        <taxon>Thermoanaerobacterales</taxon>
        <taxon>Thermoanaerobacteraceae</taxon>
        <taxon>Caldanaerobacter</taxon>
    </lineage>
</organism>
<feature type="chain" id="PRO_0000180067" description="GTPase Era">
    <location>
        <begin position="1"/>
        <end position="298"/>
    </location>
</feature>
<feature type="domain" description="Era-type G" evidence="2">
    <location>
        <begin position="4"/>
        <end position="171"/>
    </location>
</feature>
<feature type="domain" description="KH type-2" evidence="1">
    <location>
        <begin position="202"/>
        <end position="280"/>
    </location>
</feature>
<feature type="region of interest" description="G1" evidence="2">
    <location>
        <begin position="12"/>
        <end position="19"/>
    </location>
</feature>
<feature type="region of interest" description="G2" evidence="2">
    <location>
        <begin position="38"/>
        <end position="42"/>
    </location>
</feature>
<feature type="region of interest" description="G3" evidence="2">
    <location>
        <begin position="59"/>
        <end position="62"/>
    </location>
</feature>
<feature type="region of interest" description="G4" evidence="2">
    <location>
        <begin position="121"/>
        <end position="124"/>
    </location>
</feature>
<feature type="region of interest" description="G5" evidence="2">
    <location>
        <begin position="150"/>
        <end position="152"/>
    </location>
</feature>
<feature type="binding site" evidence="1">
    <location>
        <begin position="12"/>
        <end position="19"/>
    </location>
    <ligand>
        <name>GTP</name>
        <dbReference type="ChEBI" id="CHEBI:37565"/>
    </ligand>
</feature>
<feature type="binding site" evidence="1">
    <location>
        <begin position="59"/>
        <end position="63"/>
    </location>
    <ligand>
        <name>GTP</name>
        <dbReference type="ChEBI" id="CHEBI:37565"/>
    </ligand>
</feature>
<feature type="binding site" evidence="1">
    <location>
        <begin position="121"/>
        <end position="124"/>
    </location>
    <ligand>
        <name>GTP</name>
        <dbReference type="ChEBI" id="CHEBI:37565"/>
    </ligand>
</feature>
<evidence type="ECO:0000255" key="1">
    <source>
        <dbReference type="HAMAP-Rule" id="MF_00367"/>
    </source>
</evidence>
<evidence type="ECO:0000255" key="2">
    <source>
        <dbReference type="PROSITE-ProRule" id="PRU01050"/>
    </source>
</evidence>
<dbReference type="EMBL" id="AE008691">
    <property type="protein sequence ID" value="AAM24229.1"/>
    <property type="molecule type" value="Genomic_DNA"/>
</dbReference>
<dbReference type="RefSeq" id="WP_011025348.1">
    <property type="nucleotide sequence ID" value="NC_003869.1"/>
</dbReference>
<dbReference type="SMR" id="Q8RB50"/>
<dbReference type="STRING" id="273068.TTE0974"/>
<dbReference type="KEGG" id="tte:TTE0974"/>
<dbReference type="eggNOG" id="COG1159">
    <property type="taxonomic scope" value="Bacteria"/>
</dbReference>
<dbReference type="HOGENOM" id="CLU_038009_1_0_9"/>
<dbReference type="OrthoDB" id="9805918at2"/>
<dbReference type="Proteomes" id="UP000000555">
    <property type="component" value="Chromosome"/>
</dbReference>
<dbReference type="GO" id="GO:0005829">
    <property type="term" value="C:cytosol"/>
    <property type="evidence" value="ECO:0007669"/>
    <property type="project" value="TreeGrafter"/>
</dbReference>
<dbReference type="GO" id="GO:0005886">
    <property type="term" value="C:plasma membrane"/>
    <property type="evidence" value="ECO:0007669"/>
    <property type="project" value="UniProtKB-SubCell"/>
</dbReference>
<dbReference type="GO" id="GO:0005525">
    <property type="term" value="F:GTP binding"/>
    <property type="evidence" value="ECO:0007669"/>
    <property type="project" value="UniProtKB-UniRule"/>
</dbReference>
<dbReference type="GO" id="GO:0003924">
    <property type="term" value="F:GTPase activity"/>
    <property type="evidence" value="ECO:0007669"/>
    <property type="project" value="UniProtKB-UniRule"/>
</dbReference>
<dbReference type="GO" id="GO:0043024">
    <property type="term" value="F:ribosomal small subunit binding"/>
    <property type="evidence" value="ECO:0007669"/>
    <property type="project" value="TreeGrafter"/>
</dbReference>
<dbReference type="GO" id="GO:0070181">
    <property type="term" value="F:small ribosomal subunit rRNA binding"/>
    <property type="evidence" value="ECO:0007669"/>
    <property type="project" value="UniProtKB-UniRule"/>
</dbReference>
<dbReference type="GO" id="GO:0000028">
    <property type="term" value="P:ribosomal small subunit assembly"/>
    <property type="evidence" value="ECO:0007669"/>
    <property type="project" value="TreeGrafter"/>
</dbReference>
<dbReference type="CDD" id="cd04163">
    <property type="entry name" value="Era"/>
    <property type="match status" value="1"/>
</dbReference>
<dbReference type="CDD" id="cd22534">
    <property type="entry name" value="KH-II_Era"/>
    <property type="match status" value="1"/>
</dbReference>
<dbReference type="FunFam" id="3.30.300.20:FF:000003">
    <property type="entry name" value="GTPase Era"/>
    <property type="match status" value="1"/>
</dbReference>
<dbReference type="FunFam" id="3.40.50.300:FF:000094">
    <property type="entry name" value="GTPase Era"/>
    <property type="match status" value="1"/>
</dbReference>
<dbReference type="Gene3D" id="3.30.300.20">
    <property type="match status" value="1"/>
</dbReference>
<dbReference type="Gene3D" id="3.40.50.300">
    <property type="entry name" value="P-loop containing nucleotide triphosphate hydrolases"/>
    <property type="match status" value="1"/>
</dbReference>
<dbReference type="HAMAP" id="MF_00367">
    <property type="entry name" value="GTPase_Era"/>
    <property type="match status" value="1"/>
</dbReference>
<dbReference type="InterPro" id="IPR030388">
    <property type="entry name" value="G_ERA_dom"/>
</dbReference>
<dbReference type="InterPro" id="IPR006073">
    <property type="entry name" value="GTP-bd"/>
</dbReference>
<dbReference type="InterPro" id="IPR005662">
    <property type="entry name" value="GTPase_Era-like"/>
</dbReference>
<dbReference type="InterPro" id="IPR015946">
    <property type="entry name" value="KH_dom-like_a/b"/>
</dbReference>
<dbReference type="InterPro" id="IPR004044">
    <property type="entry name" value="KH_dom_type_2"/>
</dbReference>
<dbReference type="InterPro" id="IPR009019">
    <property type="entry name" value="KH_sf_prok-type"/>
</dbReference>
<dbReference type="InterPro" id="IPR027417">
    <property type="entry name" value="P-loop_NTPase"/>
</dbReference>
<dbReference type="InterPro" id="IPR005225">
    <property type="entry name" value="Small_GTP-bd"/>
</dbReference>
<dbReference type="NCBIfam" id="TIGR00436">
    <property type="entry name" value="era"/>
    <property type="match status" value="1"/>
</dbReference>
<dbReference type="NCBIfam" id="NF000908">
    <property type="entry name" value="PRK00089.1"/>
    <property type="match status" value="1"/>
</dbReference>
<dbReference type="NCBIfam" id="TIGR00231">
    <property type="entry name" value="small_GTP"/>
    <property type="match status" value="1"/>
</dbReference>
<dbReference type="PANTHER" id="PTHR42698">
    <property type="entry name" value="GTPASE ERA"/>
    <property type="match status" value="1"/>
</dbReference>
<dbReference type="PANTHER" id="PTHR42698:SF1">
    <property type="entry name" value="GTPASE ERA, MITOCHONDRIAL"/>
    <property type="match status" value="1"/>
</dbReference>
<dbReference type="Pfam" id="PF07650">
    <property type="entry name" value="KH_2"/>
    <property type="match status" value="1"/>
</dbReference>
<dbReference type="Pfam" id="PF01926">
    <property type="entry name" value="MMR_HSR1"/>
    <property type="match status" value="1"/>
</dbReference>
<dbReference type="PRINTS" id="PR00449">
    <property type="entry name" value="RASTRNSFRMNG"/>
</dbReference>
<dbReference type="SUPFAM" id="SSF52540">
    <property type="entry name" value="P-loop containing nucleoside triphosphate hydrolases"/>
    <property type="match status" value="1"/>
</dbReference>
<dbReference type="SUPFAM" id="SSF54814">
    <property type="entry name" value="Prokaryotic type KH domain (KH-domain type II)"/>
    <property type="match status" value="1"/>
</dbReference>
<dbReference type="PROSITE" id="PS51713">
    <property type="entry name" value="G_ERA"/>
    <property type="match status" value="1"/>
</dbReference>
<dbReference type="PROSITE" id="PS50823">
    <property type="entry name" value="KH_TYPE_2"/>
    <property type="match status" value="1"/>
</dbReference>
<reference key="1">
    <citation type="journal article" date="2002" name="Genome Res.">
        <title>A complete sequence of the T. tengcongensis genome.</title>
        <authorList>
            <person name="Bao Q."/>
            <person name="Tian Y."/>
            <person name="Li W."/>
            <person name="Xu Z."/>
            <person name="Xuan Z."/>
            <person name="Hu S."/>
            <person name="Dong W."/>
            <person name="Yang J."/>
            <person name="Chen Y."/>
            <person name="Xue Y."/>
            <person name="Xu Y."/>
            <person name="Lai X."/>
            <person name="Huang L."/>
            <person name="Dong X."/>
            <person name="Ma Y."/>
            <person name="Ling L."/>
            <person name="Tan H."/>
            <person name="Chen R."/>
            <person name="Wang J."/>
            <person name="Yu J."/>
            <person name="Yang H."/>
        </authorList>
    </citation>
    <scope>NUCLEOTIDE SEQUENCE [LARGE SCALE GENOMIC DNA]</scope>
    <source>
        <strain>DSM 15242 / JCM 11007 / NBRC 100824 / MB4</strain>
    </source>
</reference>
<name>ERA_CALS4</name>
<sequence>MAYRAGFVALIGRTNVGKSTLLNAILKEKVAITSPKPQTTRNTIRGILTTEDYQIIFVDTPGIHKPKSKLSEFMIEVAKRTLKDVDLILYMVEPDTSIGPGDRYILDNLKEVDTPVILVVNKIDLVPAERVEEAIKVFKSEYNFKDVVAISASLGTNVEVLKEKIVSFLPEGPRYYLDDYITDQPEKLIVAEIIREKMLYFLEEEVPHGVYVEVESIKEREDKEIVDIDAYIYCEKESHKGIIIGKNGQMLKKIGQAARQDLEEFYGKQVFLQLWVKVRKGWRDNEKLLRKLGYAIDK</sequence>
<gene>
    <name evidence="1" type="primary">era</name>
    <name type="ordered locus">TTE0974</name>
</gene>
<keyword id="KW-1003">Cell membrane</keyword>
<keyword id="KW-0963">Cytoplasm</keyword>
<keyword id="KW-0342">GTP-binding</keyword>
<keyword id="KW-0472">Membrane</keyword>
<keyword id="KW-0547">Nucleotide-binding</keyword>
<keyword id="KW-1185">Reference proteome</keyword>
<keyword id="KW-0690">Ribosome biogenesis</keyword>
<keyword id="KW-0694">RNA-binding</keyword>
<keyword id="KW-0699">rRNA-binding</keyword>